<sequence length="549" mass="58645">MKSDTIKRGIQRAPHRSLLARCGLTDDDFEKPFIGIANSYTDIVPGHIHLRELAEAVKEGVNAAGGVAFEFNTMAICDGIAMNHDGMKYSLASREIVADTVESMAMAHALDGLVLLPTCDKIVPGMLMAAARLDIPAIVVTGGPMLPGEFKGRKVDLINVYEGVGTVSAGEMSEDELEELERCACPGPRSCAGLFTANTMACLTEALGMSLPGCATAHAVSSRKRQIARLSGKRIVEMVQENLKPTMIMSQEAFENAVMVDLALGGSTNTTLHIPAIAAEIDGLNINLDLFDELSRVIPHIASISPAGEHMMLDLDRAGGIPAVLKTLEDHINRECVTCTGRTVQENIENVKVGHRDVIRPLDSPVHSEGGLAILRGNLAPRGSVVKQGAVAEDMMVHEGPAKVFNSEDECMEAIFGGRIDEGDVIVIRYEGPKGGPGMREMLNPTSAIAGMGLERVALITDGRFSGGTRGPCVGHVSPEAMEDGPLAAVNDGDIIRIDIPSRKLEVDLSPREIEERLQSAVKPRRSVKGWLARYRKLAGSADTGAVLR</sequence>
<name>ILVD_METTH</name>
<reference key="1">
    <citation type="journal article" date="1997" name="J. Bacteriol.">
        <title>Complete genome sequence of Methanobacterium thermoautotrophicum deltaH: functional analysis and comparative genomics.</title>
        <authorList>
            <person name="Smith D.R."/>
            <person name="Doucette-Stamm L.A."/>
            <person name="Deloughery C."/>
            <person name="Lee H.-M."/>
            <person name="Dubois J."/>
            <person name="Aldredge T."/>
            <person name="Bashirzadeh R."/>
            <person name="Blakely D."/>
            <person name="Cook R."/>
            <person name="Gilbert K."/>
            <person name="Harrison D."/>
            <person name="Hoang L."/>
            <person name="Keagle P."/>
            <person name="Lumm W."/>
            <person name="Pothier B."/>
            <person name="Qiu D."/>
            <person name="Spadafora R."/>
            <person name="Vicare R."/>
            <person name="Wang Y."/>
            <person name="Wierzbowski J."/>
            <person name="Gibson R."/>
            <person name="Jiwani N."/>
            <person name="Caruso A."/>
            <person name="Bush D."/>
            <person name="Safer H."/>
            <person name="Patwell D."/>
            <person name="Prabhakar S."/>
            <person name="McDougall S."/>
            <person name="Shimer G."/>
            <person name="Goyal A."/>
            <person name="Pietrovski S."/>
            <person name="Church G.M."/>
            <person name="Daniels C.J."/>
            <person name="Mao J.-I."/>
            <person name="Rice P."/>
            <person name="Noelling J."/>
            <person name="Reeve J.N."/>
        </authorList>
    </citation>
    <scope>NUCLEOTIDE SEQUENCE [LARGE SCALE GENOMIC DNA]</scope>
    <source>
        <strain>ATCC 29096 / DSM 1053 / JCM 10044 / NBRC 100330 / Delta H</strain>
    </source>
</reference>
<dbReference type="EC" id="4.2.1.9" evidence="1"/>
<dbReference type="EMBL" id="AE000666">
    <property type="protein sequence ID" value="AAB85924.1"/>
    <property type="status" value="ALT_INIT"/>
    <property type="molecule type" value="Genomic_DNA"/>
</dbReference>
<dbReference type="PIR" id="H69059">
    <property type="entry name" value="H69059"/>
</dbReference>
<dbReference type="SMR" id="O27498"/>
<dbReference type="FunCoup" id="O27498">
    <property type="interactions" value="175"/>
</dbReference>
<dbReference type="STRING" id="187420.MTH_1449"/>
<dbReference type="PaxDb" id="187420-MTH_1449"/>
<dbReference type="EnsemblBacteria" id="AAB85924">
    <property type="protein sequence ID" value="AAB85924"/>
    <property type="gene ID" value="MTH_1449"/>
</dbReference>
<dbReference type="KEGG" id="mth:MTH_1449"/>
<dbReference type="PATRIC" id="fig|187420.15.peg.1411"/>
<dbReference type="HOGENOM" id="CLU_014271_4_2_2"/>
<dbReference type="InParanoid" id="O27498"/>
<dbReference type="BioCyc" id="MetaCyc:MONOMER-11919"/>
<dbReference type="UniPathway" id="UPA00047">
    <property type="reaction ID" value="UER00057"/>
</dbReference>
<dbReference type="UniPathway" id="UPA00049">
    <property type="reaction ID" value="UER00061"/>
</dbReference>
<dbReference type="Proteomes" id="UP000005223">
    <property type="component" value="Chromosome"/>
</dbReference>
<dbReference type="GO" id="GO:0005829">
    <property type="term" value="C:cytosol"/>
    <property type="evidence" value="ECO:0007669"/>
    <property type="project" value="TreeGrafter"/>
</dbReference>
<dbReference type="GO" id="GO:0051537">
    <property type="term" value="F:2 iron, 2 sulfur cluster binding"/>
    <property type="evidence" value="ECO:0007669"/>
    <property type="project" value="UniProtKB-UniRule"/>
</dbReference>
<dbReference type="GO" id="GO:0004160">
    <property type="term" value="F:dihydroxy-acid dehydratase activity"/>
    <property type="evidence" value="ECO:0007669"/>
    <property type="project" value="UniProtKB-UniRule"/>
</dbReference>
<dbReference type="GO" id="GO:0000287">
    <property type="term" value="F:magnesium ion binding"/>
    <property type="evidence" value="ECO:0007669"/>
    <property type="project" value="UniProtKB-UniRule"/>
</dbReference>
<dbReference type="GO" id="GO:0009097">
    <property type="term" value="P:isoleucine biosynthetic process"/>
    <property type="evidence" value="ECO:0007669"/>
    <property type="project" value="UniProtKB-UniRule"/>
</dbReference>
<dbReference type="GO" id="GO:0009099">
    <property type="term" value="P:L-valine biosynthetic process"/>
    <property type="evidence" value="ECO:0007669"/>
    <property type="project" value="UniProtKB-UniRule"/>
</dbReference>
<dbReference type="FunFam" id="3.50.30.80:FF:000001">
    <property type="entry name" value="Dihydroxy-acid dehydratase"/>
    <property type="match status" value="1"/>
</dbReference>
<dbReference type="Gene3D" id="3.50.30.80">
    <property type="entry name" value="IlvD/EDD C-terminal domain-like"/>
    <property type="match status" value="1"/>
</dbReference>
<dbReference type="HAMAP" id="MF_00012">
    <property type="entry name" value="IlvD"/>
    <property type="match status" value="1"/>
</dbReference>
<dbReference type="InterPro" id="IPR042096">
    <property type="entry name" value="Dihydro-acid_dehy_C"/>
</dbReference>
<dbReference type="InterPro" id="IPR004404">
    <property type="entry name" value="DihydroxyA_deHydtase"/>
</dbReference>
<dbReference type="InterPro" id="IPR020558">
    <property type="entry name" value="DiOHA_6PGluconate_deHydtase_CS"/>
</dbReference>
<dbReference type="InterPro" id="IPR056740">
    <property type="entry name" value="ILV_EDD_C"/>
</dbReference>
<dbReference type="InterPro" id="IPR000581">
    <property type="entry name" value="ILV_EDD_N"/>
</dbReference>
<dbReference type="InterPro" id="IPR037237">
    <property type="entry name" value="IlvD/EDD_N"/>
</dbReference>
<dbReference type="NCBIfam" id="TIGR00110">
    <property type="entry name" value="ilvD"/>
    <property type="match status" value="1"/>
</dbReference>
<dbReference type="NCBIfam" id="NF002068">
    <property type="entry name" value="PRK00911.1"/>
    <property type="match status" value="1"/>
</dbReference>
<dbReference type="PANTHER" id="PTHR43661">
    <property type="entry name" value="D-XYLONATE DEHYDRATASE"/>
    <property type="match status" value="1"/>
</dbReference>
<dbReference type="PANTHER" id="PTHR43661:SF3">
    <property type="entry name" value="D-XYLONATE DEHYDRATASE YAGF-RELATED"/>
    <property type="match status" value="1"/>
</dbReference>
<dbReference type="Pfam" id="PF24877">
    <property type="entry name" value="ILV_EDD_C"/>
    <property type="match status" value="1"/>
</dbReference>
<dbReference type="Pfam" id="PF00920">
    <property type="entry name" value="ILVD_EDD_N"/>
    <property type="match status" value="1"/>
</dbReference>
<dbReference type="SUPFAM" id="SSF143975">
    <property type="entry name" value="IlvD/EDD N-terminal domain-like"/>
    <property type="match status" value="1"/>
</dbReference>
<dbReference type="SUPFAM" id="SSF52016">
    <property type="entry name" value="LeuD/IlvD-like"/>
    <property type="match status" value="1"/>
</dbReference>
<dbReference type="PROSITE" id="PS00886">
    <property type="entry name" value="ILVD_EDD_1"/>
    <property type="match status" value="1"/>
</dbReference>
<dbReference type="PROSITE" id="PS00887">
    <property type="entry name" value="ILVD_EDD_2"/>
    <property type="match status" value="1"/>
</dbReference>
<proteinExistence type="inferred from homology"/>
<keyword id="KW-0001">2Fe-2S</keyword>
<keyword id="KW-0028">Amino-acid biosynthesis</keyword>
<keyword id="KW-0100">Branched-chain amino acid biosynthesis</keyword>
<keyword id="KW-0408">Iron</keyword>
<keyword id="KW-0411">Iron-sulfur</keyword>
<keyword id="KW-0456">Lyase</keyword>
<keyword id="KW-0460">Magnesium</keyword>
<keyword id="KW-0479">Metal-binding</keyword>
<keyword id="KW-1185">Reference proteome</keyword>
<gene>
    <name evidence="1" type="primary">ilvD</name>
    <name type="ordered locus">MTH_1449</name>
</gene>
<protein>
    <recommendedName>
        <fullName evidence="1">Dihydroxy-acid dehydratase</fullName>
        <shortName evidence="1">DAD</shortName>
        <ecNumber evidence="1">4.2.1.9</ecNumber>
    </recommendedName>
</protein>
<evidence type="ECO:0000255" key="1">
    <source>
        <dbReference type="HAMAP-Rule" id="MF_00012"/>
    </source>
</evidence>
<evidence type="ECO:0000305" key="2"/>
<comment type="function">
    <text evidence="1">Functions in the biosynthesis of branched-chain amino acids. Catalyzes the dehydration of (2R,3R)-2,3-dihydroxy-3-methylpentanoate (2,3-dihydroxy-3-methylvalerate) into 2-oxo-3-methylpentanoate (2-oxo-3-methylvalerate) and of (2R)-2,3-dihydroxy-3-methylbutanoate (2,3-dihydroxyisovalerate) into 2-oxo-3-methylbutanoate (2-oxoisovalerate), the penultimate precursor to L-isoleucine and L-valine, respectively.</text>
</comment>
<comment type="catalytic activity">
    <reaction evidence="1">
        <text>(2R)-2,3-dihydroxy-3-methylbutanoate = 3-methyl-2-oxobutanoate + H2O</text>
        <dbReference type="Rhea" id="RHEA:24809"/>
        <dbReference type="ChEBI" id="CHEBI:11851"/>
        <dbReference type="ChEBI" id="CHEBI:15377"/>
        <dbReference type="ChEBI" id="CHEBI:49072"/>
        <dbReference type="EC" id="4.2.1.9"/>
    </reaction>
    <physiologicalReaction direction="left-to-right" evidence="1">
        <dbReference type="Rhea" id="RHEA:24810"/>
    </physiologicalReaction>
</comment>
<comment type="catalytic activity">
    <reaction evidence="1">
        <text>(2R,3R)-2,3-dihydroxy-3-methylpentanoate = (S)-3-methyl-2-oxopentanoate + H2O</text>
        <dbReference type="Rhea" id="RHEA:27694"/>
        <dbReference type="ChEBI" id="CHEBI:15377"/>
        <dbReference type="ChEBI" id="CHEBI:35146"/>
        <dbReference type="ChEBI" id="CHEBI:49258"/>
        <dbReference type="EC" id="4.2.1.9"/>
    </reaction>
    <physiologicalReaction direction="left-to-right" evidence="1">
        <dbReference type="Rhea" id="RHEA:27695"/>
    </physiologicalReaction>
</comment>
<comment type="cofactor">
    <cofactor evidence="1">
        <name>[2Fe-2S] cluster</name>
        <dbReference type="ChEBI" id="CHEBI:190135"/>
    </cofactor>
    <text evidence="1">Binds 1 [2Fe-2S] cluster per subunit. This cluster acts as a Lewis acid cofactor.</text>
</comment>
<comment type="cofactor">
    <cofactor evidence="1">
        <name>Mg(2+)</name>
        <dbReference type="ChEBI" id="CHEBI:18420"/>
    </cofactor>
</comment>
<comment type="pathway">
    <text evidence="1">Amino-acid biosynthesis; L-isoleucine biosynthesis; L-isoleucine from 2-oxobutanoate: step 3/4.</text>
</comment>
<comment type="pathway">
    <text evidence="1">Amino-acid biosynthesis; L-valine biosynthesis; L-valine from pyruvate: step 3/4.</text>
</comment>
<comment type="subunit">
    <text evidence="1">Homodimer.</text>
</comment>
<comment type="similarity">
    <text evidence="1">Belongs to the IlvD/Edd family.</text>
</comment>
<comment type="sequence caution" evidence="2">
    <conflict type="erroneous initiation">
        <sequence resource="EMBL-CDS" id="AAB85924"/>
    </conflict>
</comment>
<accession>O27498</accession>
<organism>
    <name type="scientific">Methanothermobacter thermautotrophicus (strain ATCC 29096 / DSM 1053 / JCM 10044 / NBRC 100330 / Delta H)</name>
    <name type="common">Methanobacterium thermoautotrophicum</name>
    <dbReference type="NCBI Taxonomy" id="187420"/>
    <lineage>
        <taxon>Archaea</taxon>
        <taxon>Methanobacteriati</taxon>
        <taxon>Methanobacteriota</taxon>
        <taxon>Methanomada group</taxon>
        <taxon>Methanobacteria</taxon>
        <taxon>Methanobacteriales</taxon>
        <taxon>Methanobacteriaceae</taxon>
        <taxon>Methanothermobacter</taxon>
    </lineage>
</organism>
<feature type="chain" id="PRO_0000103545" description="Dihydroxy-acid dehydratase">
    <location>
        <begin position="1"/>
        <end position="549"/>
    </location>
</feature>
<feature type="active site" description="Proton acceptor" evidence="1">
    <location>
        <position position="466"/>
    </location>
</feature>
<feature type="binding site" evidence="1">
    <location>
        <position position="78"/>
    </location>
    <ligand>
        <name>Mg(2+)</name>
        <dbReference type="ChEBI" id="CHEBI:18420"/>
    </ligand>
</feature>
<feature type="binding site" evidence="1">
    <location>
        <position position="119"/>
    </location>
    <ligand>
        <name>[2Fe-2S] cluster</name>
        <dbReference type="ChEBI" id="CHEBI:190135"/>
    </ligand>
</feature>
<feature type="binding site" evidence="1">
    <location>
        <position position="120"/>
    </location>
    <ligand>
        <name>Mg(2+)</name>
        <dbReference type="ChEBI" id="CHEBI:18420"/>
    </ligand>
</feature>
<feature type="binding site" description="via carbamate group" evidence="1">
    <location>
        <position position="121"/>
    </location>
    <ligand>
        <name>Mg(2+)</name>
        <dbReference type="ChEBI" id="CHEBI:18420"/>
    </ligand>
</feature>
<feature type="binding site" evidence="1">
    <location>
        <position position="191"/>
    </location>
    <ligand>
        <name>[2Fe-2S] cluster</name>
        <dbReference type="ChEBI" id="CHEBI:190135"/>
    </ligand>
</feature>
<feature type="binding site" evidence="1">
    <location>
        <position position="441"/>
    </location>
    <ligand>
        <name>Mg(2+)</name>
        <dbReference type="ChEBI" id="CHEBI:18420"/>
    </ligand>
</feature>
<feature type="modified residue" description="N6-carboxylysine" evidence="1">
    <location>
        <position position="121"/>
    </location>
</feature>